<proteinExistence type="inferred from homology"/>
<feature type="chain" id="PRO_0000178157" description="dITP/XTP pyrophosphatase">
    <location>
        <begin position="1"/>
        <end position="207"/>
    </location>
</feature>
<feature type="active site" description="Proton acceptor" evidence="1">
    <location>
        <position position="72"/>
    </location>
</feature>
<feature type="binding site" evidence="1">
    <location>
        <begin position="7"/>
        <end position="12"/>
    </location>
    <ligand>
        <name>substrate</name>
    </ligand>
</feature>
<feature type="binding site" evidence="1">
    <location>
        <position position="72"/>
    </location>
    <ligand>
        <name>Mg(2+)</name>
        <dbReference type="ChEBI" id="CHEBI:18420"/>
    </ligand>
</feature>
<feature type="binding site" evidence="1">
    <location>
        <position position="73"/>
    </location>
    <ligand>
        <name>substrate</name>
    </ligand>
</feature>
<feature type="binding site" evidence="1">
    <location>
        <begin position="155"/>
        <end position="158"/>
    </location>
    <ligand>
        <name>substrate</name>
    </ligand>
</feature>
<feature type="binding site" evidence="1">
    <location>
        <position position="183"/>
    </location>
    <ligand>
        <name>substrate</name>
    </ligand>
</feature>
<feature type="binding site" evidence="1">
    <location>
        <begin position="188"/>
        <end position="189"/>
    </location>
    <ligand>
        <name>substrate</name>
    </ligand>
</feature>
<accession>Q6NFN7</accession>
<dbReference type="EC" id="3.6.1.66" evidence="1"/>
<dbReference type="EMBL" id="BX248359">
    <property type="protein sequence ID" value="CAE50379.1"/>
    <property type="molecule type" value="Genomic_DNA"/>
</dbReference>
<dbReference type="SMR" id="Q6NFN7"/>
<dbReference type="STRING" id="257309.DIP1850"/>
<dbReference type="KEGG" id="cdi:DIP1850"/>
<dbReference type="HOGENOM" id="CLU_082080_0_1_11"/>
<dbReference type="Proteomes" id="UP000002198">
    <property type="component" value="Chromosome"/>
</dbReference>
<dbReference type="GO" id="GO:0005829">
    <property type="term" value="C:cytosol"/>
    <property type="evidence" value="ECO:0007669"/>
    <property type="project" value="TreeGrafter"/>
</dbReference>
<dbReference type="GO" id="GO:0035870">
    <property type="term" value="F:dITP diphosphatase activity"/>
    <property type="evidence" value="ECO:0007669"/>
    <property type="project" value="RHEA"/>
</dbReference>
<dbReference type="GO" id="GO:0036220">
    <property type="term" value="F:ITP diphosphatase activity"/>
    <property type="evidence" value="ECO:0007669"/>
    <property type="project" value="UniProtKB-EC"/>
</dbReference>
<dbReference type="GO" id="GO:0046872">
    <property type="term" value="F:metal ion binding"/>
    <property type="evidence" value="ECO:0007669"/>
    <property type="project" value="UniProtKB-KW"/>
</dbReference>
<dbReference type="GO" id="GO:0000166">
    <property type="term" value="F:nucleotide binding"/>
    <property type="evidence" value="ECO:0007669"/>
    <property type="project" value="UniProtKB-KW"/>
</dbReference>
<dbReference type="GO" id="GO:0017111">
    <property type="term" value="F:ribonucleoside triphosphate phosphatase activity"/>
    <property type="evidence" value="ECO:0007669"/>
    <property type="project" value="InterPro"/>
</dbReference>
<dbReference type="GO" id="GO:0036222">
    <property type="term" value="F:XTP diphosphatase activity"/>
    <property type="evidence" value="ECO:0007669"/>
    <property type="project" value="RHEA"/>
</dbReference>
<dbReference type="GO" id="GO:0009117">
    <property type="term" value="P:nucleotide metabolic process"/>
    <property type="evidence" value="ECO:0007669"/>
    <property type="project" value="UniProtKB-KW"/>
</dbReference>
<dbReference type="GO" id="GO:0009146">
    <property type="term" value="P:purine nucleoside triphosphate catabolic process"/>
    <property type="evidence" value="ECO:0007669"/>
    <property type="project" value="UniProtKB-UniRule"/>
</dbReference>
<dbReference type="CDD" id="cd00515">
    <property type="entry name" value="HAM1"/>
    <property type="match status" value="1"/>
</dbReference>
<dbReference type="FunFam" id="3.90.950.10:FF:000001">
    <property type="entry name" value="dITP/XTP pyrophosphatase"/>
    <property type="match status" value="1"/>
</dbReference>
<dbReference type="Gene3D" id="3.90.950.10">
    <property type="match status" value="1"/>
</dbReference>
<dbReference type="HAMAP" id="MF_01405">
    <property type="entry name" value="Non_canon_purine_NTPase"/>
    <property type="match status" value="1"/>
</dbReference>
<dbReference type="InterPro" id="IPR020922">
    <property type="entry name" value="dITP/XTP_pyrophosphatase"/>
</dbReference>
<dbReference type="InterPro" id="IPR029001">
    <property type="entry name" value="ITPase-like_fam"/>
</dbReference>
<dbReference type="InterPro" id="IPR002637">
    <property type="entry name" value="RdgB/HAM1"/>
</dbReference>
<dbReference type="NCBIfam" id="TIGR00042">
    <property type="entry name" value="RdgB/HAM1 family non-canonical purine NTP pyrophosphatase"/>
    <property type="match status" value="1"/>
</dbReference>
<dbReference type="PANTHER" id="PTHR11067:SF9">
    <property type="entry name" value="INOSINE TRIPHOSPHATE PYROPHOSPHATASE"/>
    <property type="match status" value="1"/>
</dbReference>
<dbReference type="PANTHER" id="PTHR11067">
    <property type="entry name" value="INOSINE TRIPHOSPHATE PYROPHOSPHATASE/HAM1 PROTEIN"/>
    <property type="match status" value="1"/>
</dbReference>
<dbReference type="Pfam" id="PF01725">
    <property type="entry name" value="Ham1p_like"/>
    <property type="match status" value="1"/>
</dbReference>
<dbReference type="SUPFAM" id="SSF52972">
    <property type="entry name" value="ITPase-like"/>
    <property type="match status" value="1"/>
</dbReference>
<sequence>MKVLVASNNAKKLGELRTILENAGLSSVEVVPLSAIDAYDEPVEDGRTFADNALIKARAGAHHSGLITIADDSGFAVEELNGMPGVLSARWSGQHGNDATNNELVLAQMKHVPEERRHAAFVSVCALVTPDGDEHIVEGRWEGRMLTAPRGANGFGYDPLFVPAEEDAAGTGRTSAEMSPAEKNAISHRGKALQQLVPIIAGYSTFF</sequence>
<evidence type="ECO:0000255" key="1">
    <source>
        <dbReference type="HAMAP-Rule" id="MF_01405"/>
    </source>
</evidence>
<gene>
    <name type="ordered locus">DIP1850</name>
</gene>
<organism>
    <name type="scientific">Corynebacterium diphtheriae (strain ATCC 700971 / NCTC 13129 / Biotype gravis)</name>
    <dbReference type="NCBI Taxonomy" id="257309"/>
    <lineage>
        <taxon>Bacteria</taxon>
        <taxon>Bacillati</taxon>
        <taxon>Actinomycetota</taxon>
        <taxon>Actinomycetes</taxon>
        <taxon>Mycobacteriales</taxon>
        <taxon>Corynebacteriaceae</taxon>
        <taxon>Corynebacterium</taxon>
    </lineage>
</organism>
<name>IXTPA_CORDI</name>
<reference key="1">
    <citation type="journal article" date="2003" name="Nucleic Acids Res.">
        <title>The complete genome sequence and analysis of Corynebacterium diphtheriae NCTC13129.</title>
        <authorList>
            <person name="Cerdeno-Tarraga A.-M."/>
            <person name="Efstratiou A."/>
            <person name="Dover L.G."/>
            <person name="Holden M.T.G."/>
            <person name="Pallen M.J."/>
            <person name="Bentley S.D."/>
            <person name="Besra G.S."/>
            <person name="Churcher C.M."/>
            <person name="James K.D."/>
            <person name="De Zoysa A."/>
            <person name="Chillingworth T."/>
            <person name="Cronin A."/>
            <person name="Dowd L."/>
            <person name="Feltwell T."/>
            <person name="Hamlin N."/>
            <person name="Holroyd S."/>
            <person name="Jagels K."/>
            <person name="Moule S."/>
            <person name="Quail M.A."/>
            <person name="Rabbinowitsch E."/>
            <person name="Rutherford K.M."/>
            <person name="Thomson N.R."/>
            <person name="Unwin L."/>
            <person name="Whitehead S."/>
            <person name="Barrell B.G."/>
            <person name="Parkhill J."/>
        </authorList>
    </citation>
    <scope>NUCLEOTIDE SEQUENCE [LARGE SCALE GENOMIC DNA]</scope>
    <source>
        <strain>ATCC 700971 / NCTC 13129 / Biotype gravis</strain>
    </source>
</reference>
<protein>
    <recommendedName>
        <fullName evidence="1">dITP/XTP pyrophosphatase</fullName>
        <ecNumber evidence="1">3.6.1.66</ecNumber>
    </recommendedName>
    <alternativeName>
        <fullName evidence="1">Non-canonical purine NTP pyrophosphatase</fullName>
    </alternativeName>
    <alternativeName>
        <fullName evidence="1">Non-standard purine NTP pyrophosphatase</fullName>
    </alternativeName>
    <alternativeName>
        <fullName evidence="1">Nucleoside-triphosphate diphosphatase</fullName>
    </alternativeName>
    <alternativeName>
        <fullName evidence="1">Nucleoside-triphosphate pyrophosphatase</fullName>
        <shortName evidence="1">NTPase</shortName>
    </alternativeName>
</protein>
<keyword id="KW-0378">Hydrolase</keyword>
<keyword id="KW-0460">Magnesium</keyword>
<keyword id="KW-0479">Metal-binding</keyword>
<keyword id="KW-0546">Nucleotide metabolism</keyword>
<keyword id="KW-0547">Nucleotide-binding</keyword>
<keyword id="KW-1185">Reference proteome</keyword>
<comment type="function">
    <text evidence="1">Pyrophosphatase that catalyzes the hydrolysis of nucleoside triphosphates to their monophosphate derivatives, with a high preference for the non-canonical purine nucleotides XTP (xanthosine triphosphate), dITP (deoxyinosine triphosphate) and ITP. Seems to function as a house-cleaning enzyme that removes non-canonical purine nucleotides from the nucleotide pool, thus preventing their incorporation into DNA/RNA and avoiding chromosomal lesions.</text>
</comment>
<comment type="catalytic activity">
    <reaction evidence="1">
        <text>XTP + H2O = XMP + diphosphate + H(+)</text>
        <dbReference type="Rhea" id="RHEA:28610"/>
        <dbReference type="ChEBI" id="CHEBI:15377"/>
        <dbReference type="ChEBI" id="CHEBI:15378"/>
        <dbReference type="ChEBI" id="CHEBI:33019"/>
        <dbReference type="ChEBI" id="CHEBI:57464"/>
        <dbReference type="ChEBI" id="CHEBI:61314"/>
        <dbReference type="EC" id="3.6.1.66"/>
    </reaction>
</comment>
<comment type="catalytic activity">
    <reaction evidence="1">
        <text>dITP + H2O = dIMP + diphosphate + H(+)</text>
        <dbReference type="Rhea" id="RHEA:28342"/>
        <dbReference type="ChEBI" id="CHEBI:15377"/>
        <dbReference type="ChEBI" id="CHEBI:15378"/>
        <dbReference type="ChEBI" id="CHEBI:33019"/>
        <dbReference type="ChEBI" id="CHEBI:61194"/>
        <dbReference type="ChEBI" id="CHEBI:61382"/>
        <dbReference type="EC" id="3.6.1.66"/>
    </reaction>
</comment>
<comment type="catalytic activity">
    <reaction evidence="1">
        <text>ITP + H2O = IMP + diphosphate + H(+)</text>
        <dbReference type="Rhea" id="RHEA:29399"/>
        <dbReference type="ChEBI" id="CHEBI:15377"/>
        <dbReference type="ChEBI" id="CHEBI:15378"/>
        <dbReference type="ChEBI" id="CHEBI:33019"/>
        <dbReference type="ChEBI" id="CHEBI:58053"/>
        <dbReference type="ChEBI" id="CHEBI:61402"/>
        <dbReference type="EC" id="3.6.1.66"/>
    </reaction>
</comment>
<comment type="cofactor">
    <cofactor evidence="1">
        <name>Mg(2+)</name>
        <dbReference type="ChEBI" id="CHEBI:18420"/>
    </cofactor>
    <text evidence="1">Binds 1 Mg(2+) ion per subunit.</text>
</comment>
<comment type="subunit">
    <text evidence="1">Homodimer.</text>
</comment>
<comment type="similarity">
    <text evidence="1">Belongs to the HAM1 NTPase family.</text>
</comment>